<gene>
    <name evidence="4" type="primary">RXLR51</name>
</gene>
<protein>
    <recommendedName>
        <fullName evidence="4">Secreted RxLR effector protein 51</fullName>
    </recommendedName>
</protein>
<proteinExistence type="evidence at transcript level"/>
<dbReference type="SMR" id="P0CV16"/>
<dbReference type="GlyCosmos" id="P0CV16">
    <property type="glycosylation" value="1 site, No reported glycans"/>
</dbReference>
<dbReference type="GO" id="GO:0005576">
    <property type="term" value="C:extracellular region"/>
    <property type="evidence" value="ECO:0007669"/>
    <property type="project" value="UniProtKB-SubCell"/>
</dbReference>
<dbReference type="GO" id="GO:0042025">
    <property type="term" value="C:host cell nucleus"/>
    <property type="evidence" value="ECO:0007669"/>
    <property type="project" value="UniProtKB-SubCell"/>
</dbReference>
<feature type="signal peptide" evidence="1">
    <location>
        <begin position="1"/>
        <end position="19"/>
    </location>
</feature>
<feature type="chain" id="PRO_0000447925" description="Secreted RxLR effector protein 51">
    <location>
        <begin position="20"/>
        <end position="138"/>
    </location>
</feature>
<feature type="short sequence motif" description="RxLR-dEER" evidence="6">
    <location>
        <begin position="38"/>
        <end position="53"/>
    </location>
</feature>
<feature type="glycosylation site" description="N-linked (GlcNAc...) asparagine" evidence="2">
    <location>
        <position position="101"/>
    </location>
</feature>
<organism>
    <name type="scientific">Plasmopara viticola</name>
    <name type="common">Downy mildew of grapevine</name>
    <name type="synonym">Botrytis viticola</name>
    <dbReference type="NCBI Taxonomy" id="143451"/>
    <lineage>
        <taxon>Eukaryota</taxon>
        <taxon>Sar</taxon>
        <taxon>Stramenopiles</taxon>
        <taxon>Oomycota</taxon>
        <taxon>Peronosporales</taxon>
        <taxon>Peronosporaceae</taxon>
        <taxon>Plasmopara</taxon>
    </lineage>
</organism>
<comment type="function">
    <text evidence="3">Secreted effector that completely suppresses the host cell death induced by cell death-inducing proteins.</text>
</comment>
<comment type="subcellular location">
    <subcellularLocation>
        <location evidence="3">Secreted</location>
    </subcellularLocation>
    <subcellularLocation>
        <location evidence="3">Host nucleus</location>
    </subcellularLocation>
</comment>
<comment type="domain">
    <text evidence="6">The RxLR-dEER motif acts to carry the protein into the host cell cytoplasm through binding to cell surface phosphatidylinositol-3-phosphate.</text>
</comment>
<comment type="similarity">
    <text evidence="5">Belongs to the RxLR effector family.</text>
</comment>
<name>RLR51_PLAVT</name>
<accession>P0CV16</accession>
<sequence>MRSSTILFVLGVAMVAVNGVTTALISDGTGKGTQGKHRLLRSNSGKHKTDEERLKLSARIYGTKAYKKRQVRNRESARKFQKALLNMADGNDIARLLKKRNTTLKGLFALLARNKAGLPKEAKNHITTVYNTRRGGVL</sequence>
<keyword id="KW-0325">Glycoprotein</keyword>
<keyword id="KW-1048">Host nucleus</keyword>
<keyword id="KW-0964">Secreted</keyword>
<keyword id="KW-0732">Signal</keyword>
<keyword id="KW-0843">Virulence</keyword>
<reference key="1">
    <citation type="journal article" date="2018" name="Front. Plant Sci.">
        <title>In planta functional analysis and subcellular localization of the oomycete pathogen Plasmopara viticola candidate RXLR effector repertoire.</title>
        <authorList>
            <person name="Liu Y."/>
            <person name="Lan X."/>
            <person name="Song S."/>
            <person name="Yin L."/>
            <person name="Dry I.B."/>
            <person name="Qu J."/>
            <person name="Xiang J."/>
            <person name="Lu J."/>
        </authorList>
    </citation>
    <scope>NUCLEOTIDE SEQUENCE [MRNA]</scope>
    <scope>DOMAIN</scope>
    <scope>FUNCTION</scope>
    <scope>SUBCELLULAR LOCATION</scope>
</reference>
<evidence type="ECO:0000255" key="1"/>
<evidence type="ECO:0000255" key="2">
    <source>
        <dbReference type="PROSITE-ProRule" id="PRU00498"/>
    </source>
</evidence>
<evidence type="ECO:0000269" key="3">
    <source>
    </source>
</evidence>
<evidence type="ECO:0000303" key="4">
    <source>
    </source>
</evidence>
<evidence type="ECO:0000305" key="5"/>
<evidence type="ECO:0000305" key="6">
    <source>
    </source>
</evidence>